<sequence length="573" mass="60510">MTGLSRERYAALYGPTTGDRIRLADTDLVIEITEDRSGGTGLAGDEAVFGGGKVLRESMGQSRATRADGAPDTVITGAVILDHWGIIKADIGIRDGRIVAIGKAGNPDIMDGVHPDLVVGPSTEIIAGNGRILTAGAIDCHVHLICPQIMEEALGGGITTIVAGGTGPAEGSKATTVTPGAWHLARMLEALDTWPLNVVLLGKGNTVSAEAMWEQLRGGAAGFKLHEDWGTTPAAIDACLTVADAAGVQVNIHTDTLNEMAFVEDTLAAIKGRSIHAYHTEGAGGGHAPDIITVASHPNVLPSSTNPTRPHTVNTLDEHLDMLMVCHHLNPSVPEDLAFAESRIRPSTIAAEDLLHDIGAISMIGSDAQAMGRIGEVVLRTWQTAHVMKRRRGALEGDGRADNNRARRYVAKYTICPAVAHGLDGEIGSVEVGKLADLVLWEPAFFGVRPHAVIKGGMIAWAAMGDANASIPTPQPVLPRPMFGAAPAAAAATSVHFVSPQAIEDGLADRIDVRRSLIAVADCRHVGKAQMPLNDAMPRIEVDPDTFTVRIDGDVWQEQPAAELPMAQRYFLF</sequence>
<protein>
    <recommendedName>
        <fullName evidence="1">Urease subunit alpha</fullName>
        <ecNumber evidence="1">3.5.1.5</ecNumber>
    </recommendedName>
    <alternativeName>
        <fullName evidence="1">Urea amidohydrolase subunit alpha</fullName>
    </alternativeName>
</protein>
<dbReference type="EC" id="3.5.1.5" evidence="1"/>
<dbReference type="EMBL" id="CP000518">
    <property type="protein sequence ID" value="ABL92043.1"/>
    <property type="molecule type" value="Genomic_DNA"/>
</dbReference>
<dbReference type="SMR" id="A1UGT5"/>
<dbReference type="STRING" id="189918.Mkms_2849"/>
<dbReference type="MEROPS" id="M38.982"/>
<dbReference type="KEGG" id="mkm:Mkms_2849"/>
<dbReference type="HOGENOM" id="CLU_000980_0_0_11"/>
<dbReference type="OrthoDB" id="9802793at2"/>
<dbReference type="UniPathway" id="UPA00258">
    <property type="reaction ID" value="UER00370"/>
</dbReference>
<dbReference type="GO" id="GO:0005737">
    <property type="term" value="C:cytoplasm"/>
    <property type="evidence" value="ECO:0007669"/>
    <property type="project" value="UniProtKB-SubCell"/>
</dbReference>
<dbReference type="GO" id="GO:0016151">
    <property type="term" value="F:nickel cation binding"/>
    <property type="evidence" value="ECO:0007669"/>
    <property type="project" value="UniProtKB-UniRule"/>
</dbReference>
<dbReference type="GO" id="GO:0009039">
    <property type="term" value="F:urease activity"/>
    <property type="evidence" value="ECO:0007669"/>
    <property type="project" value="UniProtKB-UniRule"/>
</dbReference>
<dbReference type="GO" id="GO:0043419">
    <property type="term" value="P:urea catabolic process"/>
    <property type="evidence" value="ECO:0007669"/>
    <property type="project" value="UniProtKB-UniRule"/>
</dbReference>
<dbReference type="CDD" id="cd00375">
    <property type="entry name" value="Urease_alpha"/>
    <property type="match status" value="1"/>
</dbReference>
<dbReference type="Gene3D" id="3.20.20.140">
    <property type="entry name" value="Metal-dependent hydrolases"/>
    <property type="match status" value="1"/>
</dbReference>
<dbReference type="Gene3D" id="2.30.40.10">
    <property type="entry name" value="Urease, subunit C, domain 1"/>
    <property type="match status" value="1"/>
</dbReference>
<dbReference type="HAMAP" id="MF_01953">
    <property type="entry name" value="Urease_alpha"/>
    <property type="match status" value="1"/>
</dbReference>
<dbReference type="InterPro" id="IPR006680">
    <property type="entry name" value="Amidohydro-rel"/>
</dbReference>
<dbReference type="InterPro" id="IPR011059">
    <property type="entry name" value="Metal-dep_hydrolase_composite"/>
</dbReference>
<dbReference type="InterPro" id="IPR032466">
    <property type="entry name" value="Metal_Hydrolase"/>
</dbReference>
<dbReference type="InterPro" id="IPR011612">
    <property type="entry name" value="Urease_alpha_N_dom"/>
</dbReference>
<dbReference type="InterPro" id="IPR050112">
    <property type="entry name" value="Urease_alpha_subunit"/>
</dbReference>
<dbReference type="InterPro" id="IPR017950">
    <property type="entry name" value="Urease_AS"/>
</dbReference>
<dbReference type="InterPro" id="IPR005848">
    <property type="entry name" value="Urease_asu"/>
</dbReference>
<dbReference type="InterPro" id="IPR017951">
    <property type="entry name" value="Urease_asu_c"/>
</dbReference>
<dbReference type="InterPro" id="IPR029754">
    <property type="entry name" value="Urease_Ni-bd"/>
</dbReference>
<dbReference type="NCBIfam" id="NF009685">
    <property type="entry name" value="PRK13206.1"/>
    <property type="match status" value="1"/>
</dbReference>
<dbReference type="NCBIfam" id="NF009686">
    <property type="entry name" value="PRK13207.1"/>
    <property type="match status" value="1"/>
</dbReference>
<dbReference type="NCBIfam" id="TIGR01792">
    <property type="entry name" value="urease_alph"/>
    <property type="match status" value="1"/>
</dbReference>
<dbReference type="PANTHER" id="PTHR43440">
    <property type="entry name" value="UREASE"/>
    <property type="match status" value="1"/>
</dbReference>
<dbReference type="PANTHER" id="PTHR43440:SF1">
    <property type="entry name" value="UREASE"/>
    <property type="match status" value="1"/>
</dbReference>
<dbReference type="Pfam" id="PF01979">
    <property type="entry name" value="Amidohydro_1"/>
    <property type="match status" value="1"/>
</dbReference>
<dbReference type="Pfam" id="PF00449">
    <property type="entry name" value="Urease_alpha"/>
    <property type="match status" value="1"/>
</dbReference>
<dbReference type="PRINTS" id="PR01752">
    <property type="entry name" value="UREASE"/>
</dbReference>
<dbReference type="SUPFAM" id="SSF51338">
    <property type="entry name" value="Composite domain of metallo-dependent hydrolases"/>
    <property type="match status" value="2"/>
</dbReference>
<dbReference type="SUPFAM" id="SSF51556">
    <property type="entry name" value="Metallo-dependent hydrolases"/>
    <property type="match status" value="1"/>
</dbReference>
<dbReference type="PROSITE" id="PS01120">
    <property type="entry name" value="UREASE_1"/>
    <property type="match status" value="1"/>
</dbReference>
<dbReference type="PROSITE" id="PS00145">
    <property type="entry name" value="UREASE_2"/>
    <property type="match status" value="1"/>
</dbReference>
<dbReference type="PROSITE" id="PS51368">
    <property type="entry name" value="UREASE_3"/>
    <property type="match status" value="1"/>
</dbReference>
<gene>
    <name evidence="1" type="primary">ureC</name>
    <name type="ordered locus">Mkms_2849</name>
</gene>
<name>URE1_MYCSK</name>
<accession>A1UGT5</accession>
<comment type="catalytic activity">
    <reaction evidence="1">
        <text>urea + 2 H2O + H(+) = hydrogencarbonate + 2 NH4(+)</text>
        <dbReference type="Rhea" id="RHEA:20557"/>
        <dbReference type="ChEBI" id="CHEBI:15377"/>
        <dbReference type="ChEBI" id="CHEBI:15378"/>
        <dbReference type="ChEBI" id="CHEBI:16199"/>
        <dbReference type="ChEBI" id="CHEBI:17544"/>
        <dbReference type="ChEBI" id="CHEBI:28938"/>
        <dbReference type="EC" id="3.5.1.5"/>
    </reaction>
</comment>
<comment type="cofactor">
    <cofactor evidence="1">
        <name>Ni cation</name>
        <dbReference type="ChEBI" id="CHEBI:25516"/>
    </cofactor>
    <text evidence="1">Binds 2 nickel ions per subunit.</text>
</comment>
<comment type="pathway">
    <text evidence="1">Nitrogen metabolism; urea degradation; CO(2) and NH(3) from urea (urease route): step 1/1.</text>
</comment>
<comment type="subunit">
    <text evidence="1">Heterotrimer of UreA (gamma), UreB (beta) and UreC (alpha) subunits. Three heterotrimers associate to form the active enzyme.</text>
</comment>
<comment type="subcellular location">
    <subcellularLocation>
        <location evidence="1">Cytoplasm</location>
    </subcellularLocation>
</comment>
<comment type="PTM">
    <text evidence="1">Carboxylation allows a single lysine to coordinate two nickel ions.</text>
</comment>
<comment type="similarity">
    <text evidence="1">Belongs to the metallo-dependent hydrolases superfamily. Urease alpha subunit family.</text>
</comment>
<reference key="1">
    <citation type="submission" date="2006-12" db="EMBL/GenBank/DDBJ databases">
        <title>Complete sequence of chromosome of Mycobacterium sp. KMS.</title>
        <authorList>
            <consortium name="US DOE Joint Genome Institute"/>
            <person name="Copeland A."/>
            <person name="Lucas S."/>
            <person name="Lapidus A."/>
            <person name="Barry K."/>
            <person name="Detter J.C."/>
            <person name="Glavina del Rio T."/>
            <person name="Hammon N."/>
            <person name="Israni S."/>
            <person name="Dalin E."/>
            <person name="Tice H."/>
            <person name="Pitluck S."/>
            <person name="Kiss H."/>
            <person name="Brettin T."/>
            <person name="Bruce D."/>
            <person name="Han C."/>
            <person name="Tapia R."/>
            <person name="Gilna P."/>
            <person name="Schmutz J."/>
            <person name="Larimer F."/>
            <person name="Land M."/>
            <person name="Hauser L."/>
            <person name="Kyrpides N."/>
            <person name="Mikhailova N."/>
            <person name="Miller C.D."/>
            <person name="Richardson P."/>
        </authorList>
    </citation>
    <scope>NUCLEOTIDE SEQUENCE [LARGE SCALE GENOMIC DNA]</scope>
    <source>
        <strain>KMS</strain>
    </source>
</reference>
<feature type="chain" id="PRO_1000070671" description="Urease subunit alpha">
    <location>
        <begin position="1"/>
        <end position="573"/>
    </location>
</feature>
<feature type="domain" description="Urease" evidence="1">
    <location>
        <begin position="136"/>
        <end position="573"/>
    </location>
</feature>
<feature type="active site" description="Proton donor" evidence="1">
    <location>
        <position position="327"/>
    </location>
</feature>
<feature type="binding site" evidence="1">
    <location>
        <position position="141"/>
    </location>
    <ligand>
        <name>Ni(2+)</name>
        <dbReference type="ChEBI" id="CHEBI:49786"/>
        <label>1</label>
    </ligand>
</feature>
<feature type="binding site" evidence="1">
    <location>
        <position position="143"/>
    </location>
    <ligand>
        <name>Ni(2+)</name>
        <dbReference type="ChEBI" id="CHEBI:49786"/>
        <label>1</label>
    </ligand>
</feature>
<feature type="binding site" description="via carbamate group" evidence="1">
    <location>
        <position position="224"/>
    </location>
    <ligand>
        <name>Ni(2+)</name>
        <dbReference type="ChEBI" id="CHEBI:49786"/>
        <label>1</label>
    </ligand>
</feature>
<feature type="binding site" description="via carbamate group" evidence="1">
    <location>
        <position position="224"/>
    </location>
    <ligand>
        <name>Ni(2+)</name>
        <dbReference type="ChEBI" id="CHEBI:49786"/>
        <label>2</label>
    </ligand>
</feature>
<feature type="binding site" evidence="1">
    <location>
        <position position="226"/>
    </location>
    <ligand>
        <name>substrate</name>
    </ligand>
</feature>
<feature type="binding site" evidence="1">
    <location>
        <position position="253"/>
    </location>
    <ligand>
        <name>Ni(2+)</name>
        <dbReference type="ChEBI" id="CHEBI:49786"/>
        <label>2</label>
    </ligand>
</feature>
<feature type="binding site" evidence="1">
    <location>
        <position position="279"/>
    </location>
    <ligand>
        <name>Ni(2+)</name>
        <dbReference type="ChEBI" id="CHEBI:49786"/>
        <label>2</label>
    </ligand>
</feature>
<feature type="binding site" evidence="1">
    <location>
        <position position="367"/>
    </location>
    <ligand>
        <name>Ni(2+)</name>
        <dbReference type="ChEBI" id="CHEBI:49786"/>
        <label>1</label>
    </ligand>
</feature>
<feature type="modified residue" description="N6-carboxylysine" evidence="1">
    <location>
        <position position="224"/>
    </location>
</feature>
<proteinExistence type="inferred from homology"/>
<organism>
    <name type="scientific">Mycobacterium sp. (strain KMS)</name>
    <dbReference type="NCBI Taxonomy" id="189918"/>
    <lineage>
        <taxon>Bacteria</taxon>
        <taxon>Bacillati</taxon>
        <taxon>Actinomycetota</taxon>
        <taxon>Actinomycetes</taxon>
        <taxon>Mycobacteriales</taxon>
        <taxon>Mycobacteriaceae</taxon>
        <taxon>Mycobacterium</taxon>
    </lineage>
</organism>
<evidence type="ECO:0000255" key="1">
    <source>
        <dbReference type="HAMAP-Rule" id="MF_01953"/>
    </source>
</evidence>
<keyword id="KW-0963">Cytoplasm</keyword>
<keyword id="KW-0378">Hydrolase</keyword>
<keyword id="KW-0479">Metal-binding</keyword>
<keyword id="KW-0533">Nickel</keyword>